<sequence>MATALVLGYSAFDLGLFSDKDPRLKLIKKAIRKDLEAMAADGVSWLVFTGSLGFEYWVLEVAQEMKTEYGFQLATIFAFETHGENWNEGNQMKLSRFKQVDFVKYAYPRYEHKGQLRDYQQFLLENTTSSYLFYDEENETKLAYFYQKMKNQEDYFIKRLTFDELNELAENFSEN</sequence>
<name>Y409_STRZP</name>
<dbReference type="EMBL" id="CP000920">
    <property type="protein sequence ID" value="ACO21482.1"/>
    <property type="molecule type" value="Genomic_DNA"/>
</dbReference>
<dbReference type="RefSeq" id="WP_000179547.1">
    <property type="nucleotide sequence ID" value="NC_012467.1"/>
</dbReference>
<dbReference type="SMR" id="C1CIN2"/>
<dbReference type="KEGG" id="spp:SPP_0409"/>
<dbReference type="HOGENOM" id="CLU_105319_0_0_9"/>
<dbReference type="Gene3D" id="3.40.50.450">
    <property type="match status" value="1"/>
</dbReference>
<dbReference type="HAMAP" id="MF_01575">
    <property type="entry name" value="UPF0398"/>
    <property type="match status" value="1"/>
</dbReference>
<dbReference type="InterPro" id="IPR010697">
    <property type="entry name" value="YspA"/>
</dbReference>
<dbReference type="NCBIfam" id="NF010181">
    <property type="entry name" value="PRK13660.1"/>
    <property type="match status" value="1"/>
</dbReference>
<dbReference type="PANTHER" id="PTHR38440:SF1">
    <property type="entry name" value="UPF0398 PROTEIN SPR0331"/>
    <property type="match status" value="1"/>
</dbReference>
<dbReference type="PANTHER" id="PTHR38440">
    <property type="entry name" value="UPF0398 PROTEIN YPSA"/>
    <property type="match status" value="1"/>
</dbReference>
<dbReference type="Pfam" id="PF06908">
    <property type="entry name" value="YpsA"/>
    <property type="match status" value="1"/>
</dbReference>
<dbReference type="PIRSF" id="PIRSF021290">
    <property type="entry name" value="DUF1273"/>
    <property type="match status" value="1"/>
</dbReference>
<dbReference type="SUPFAM" id="SSF102405">
    <property type="entry name" value="MCP/YpsA-like"/>
    <property type="match status" value="1"/>
</dbReference>
<organism>
    <name type="scientific">Streptococcus pneumoniae (strain P1031)</name>
    <dbReference type="NCBI Taxonomy" id="488223"/>
    <lineage>
        <taxon>Bacteria</taxon>
        <taxon>Bacillati</taxon>
        <taxon>Bacillota</taxon>
        <taxon>Bacilli</taxon>
        <taxon>Lactobacillales</taxon>
        <taxon>Streptococcaceae</taxon>
        <taxon>Streptococcus</taxon>
    </lineage>
</organism>
<feature type="chain" id="PRO_1000185590" description="UPF0398 protein SPP_0409">
    <location>
        <begin position="1"/>
        <end position="175"/>
    </location>
</feature>
<reference key="1">
    <citation type="journal article" date="2010" name="Genome Biol.">
        <title>Structure and dynamics of the pan-genome of Streptococcus pneumoniae and closely related species.</title>
        <authorList>
            <person name="Donati C."/>
            <person name="Hiller N.L."/>
            <person name="Tettelin H."/>
            <person name="Muzzi A."/>
            <person name="Croucher N.J."/>
            <person name="Angiuoli S.V."/>
            <person name="Oggioni M."/>
            <person name="Dunning Hotopp J.C."/>
            <person name="Hu F.Z."/>
            <person name="Riley D.R."/>
            <person name="Covacci A."/>
            <person name="Mitchell T.J."/>
            <person name="Bentley S.D."/>
            <person name="Kilian M."/>
            <person name="Ehrlich G.D."/>
            <person name="Rappuoli R."/>
            <person name="Moxon E.R."/>
            <person name="Masignani V."/>
        </authorList>
    </citation>
    <scope>NUCLEOTIDE SEQUENCE [LARGE SCALE GENOMIC DNA]</scope>
    <source>
        <strain>P1031</strain>
    </source>
</reference>
<proteinExistence type="inferred from homology"/>
<gene>
    <name type="ordered locus">SPP_0409</name>
</gene>
<comment type="similarity">
    <text evidence="1">Belongs to the UPF0398 family.</text>
</comment>
<protein>
    <recommendedName>
        <fullName evidence="1">UPF0398 protein SPP_0409</fullName>
    </recommendedName>
</protein>
<evidence type="ECO:0000255" key="1">
    <source>
        <dbReference type="HAMAP-Rule" id="MF_01575"/>
    </source>
</evidence>
<accession>C1CIN2</accession>